<organism>
    <name type="scientific">Rattus norvegicus</name>
    <name type="common">Rat</name>
    <dbReference type="NCBI Taxonomy" id="10116"/>
    <lineage>
        <taxon>Eukaryota</taxon>
        <taxon>Metazoa</taxon>
        <taxon>Chordata</taxon>
        <taxon>Craniata</taxon>
        <taxon>Vertebrata</taxon>
        <taxon>Euteleostomi</taxon>
        <taxon>Mammalia</taxon>
        <taxon>Eutheria</taxon>
        <taxon>Euarchontoglires</taxon>
        <taxon>Glires</taxon>
        <taxon>Rodentia</taxon>
        <taxon>Myomorpha</taxon>
        <taxon>Muroidea</taxon>
        <taxon>Muridae</taxon>
        <taxon>Murinae</taxon>
        <taxon>Rattus</taxon>
    </lineage>
</organism>
<reference key="1">
    <citation type="journal article" date="2004" name="Genome Res.">
        <title>The status, quality, and expansion of the NIH full-length cDNA project: the Mammalian Gene Collection (MGC).</title>
        <authorList>
            <consortium name="The MGC Project Team"/>
        </authorList>
    </citation>
    <scope>NUCLEOTIDE SEQUENCE [LARGE SCALE MRNA]</scope>
    <source>
        <tissue>Brain</tissue>
    </source>
</reference>
<reference key="2">
    <citation type="journal article" date="2009" name="Science">
        <title>Functional proteomics identify cornichon proteins as auxiliary subunits of AMPA receptors.</title>
        <authorList>
            <person name="Schwenk J."/>
            <person name="Harmel N."/>
            <person name="Zolles G."/>
            <person name="Bildl W."/>
            <person name="Kulik A."/>
            <person name="Heimrich B."/>
            <person name="Chisaka O."/>
            <person name="Jonas P."/>
            <person name="Schulte U."/>
            <person name="Fakler B."/>
            <person name="Kloecker N."/>
        </authorList>
    </citation>
    <scope>FUNCTION</scope>
    <scope>SUBCELLULAR LOCATION</scope>
    <scope>SUBUNIT</scope>
    <scope>IDENTIFICATION BY MASS SPECTROMETRY</scope>
    <scope>TISSUE SPECIFICITY</scope>
</reference>
<reference key="3">
    <citation type="journal article" date="2010" name="Proc. Natl. Acad. Sci. U.S.A.">
        <title>Functional comparison of the effects of TARPs and cornichons on AMPA receptor trafficking and gating.</title>
        <authorList>
            <person name="Shi Y."/>
            <person name="Suh Y.H."/>
            <person name="Milstein A.D."/>
            <person name="Isozaki K."/>
            <person name="Schmid S.M."/>
            <person name="Roche K.W."/>
            <person name="Nicoll R.A."/>
        </authorList>
    </citation>
    <scope>FUNCTION</scope>
    <scope>INTERACTION WITH GRIA1</scope>
    <scope>TISSUE SPECIFICITY</scope>
</reference>
<accession>Q5BJU5</accession>
<keyword id="KW-0002">3D-structure</keyword>
<keyword id="KW-1003">Cell membrane</keyword>
<keyword id="KW-0966">Cell projection</keyword>
<keyword id="KW-0256">Endoplasmic reticulum</keyword>
<keyword id="KW-0472">Membrane</keyword>
<keyword id="KW-0628">Postsynaptic cell membrane</keyword>
<keyword id="KW-1185">Reference proteome</keyword>
<keyword id="KW-0770">Synapse</keyword>
<keyword id="KW-0812">Transmembrane</keyword>
<keyword id="KW-1133">Transmembrane helix</keyword>
<evidence type="ECO:0000250" key="1"/>
<evidence type="ECO:0000250" key="2">
    <source>
        <dbReference type="UniProtKB" id="O35089"/>
    </source>
</evidence>
<evidence type="ECO:0000255" key="3"/>
<evidence type="ECO:0000269" key="4">
    <source>
    </source>
</evidence>
<evidence type="ECO:0000269" key="5">
    <source>
    </source>
</evidence>
<evidence type="ECO:0000305" key="6"/>
<evidence type="ECO:0000312" key="7">
    <source>
        <dbReference type="RGD" id="1304930"/>
    </source>
</evidence>
<evidence type="ECO:0007829" key="8">
    <source>
        <dbReference type="PDB" id="7OCE"/>
    </source>
</evidence>
<proteinExistence type="evidence at protein level"/>
<gene>
    <name evidence="7" type="primary">Cnih2</name>
</gene>
<sequence>MAFTFAAFCYMLTLVLCASLIFFVIWHIIAFDELRTDFKNPIDQGNPARARERLKNIERICCLLRKLVVPEYSIHGLFCLMFLCAAEWVTLGLNIPLLFYHLWRYFHRPADGSEVMYDAVSIMNADILNYCQKESWCKLAFYLLSFFYYLYSMVYTLVSF</sequence>
<name>CNIH2_RAT</name>
<dbReference type="EMBL" id="BC091325">
    <property type="protein sequence ID" value="AAH91325.1"/>
    <property type="molecule type" value="mRNA"/>
</dbReference>
<dbReference type="RefSeq" id="NP_001020303.1">
    <property type="nucleotide sequence ID" value="NM_001025132.1"/>
</dbReference>
<dbReference type="PDB" id="7OCA">
    <property type="method" value="EM"/>
    <property type="resolution" value="3.40 A"/>
    <property type="chains" value="E/G=1-160"/>
</dbReference>
<dbReference type="PDB" id="7OCE">
    <property type="method" value="EM"/>
    <property type="resolution" value="3.10 A"/>
    <property type="chains" value="E/G=1-160"/>
</dbReference>
<dbReference type="PDB" id="7OCF">
    <property type="method" value="EM"/>
    <property type="resolution" value="3.60 A"/>
    <property type="chains" value="E/G=1-160"/>
</dbReference>
<dbReference type="PDBsum" id="7OCA"/>
<dbReference type="PDBsum" id="7OCE"/>
<dbReference type="PDBsum" id="7OCF"/>
<dbReference type="EMDB" id="EMD-12802"/>
<dbReference type="EMDB" id="EMD-12805"/>
<dbReference type="EMDB" id="EMD-12806"/>
<dbReference type="SMR" id="Q5BJU5"/>
<dbReference type="CORUM" id="Q5BJU5"/>
<dbReference type="DIP" id="DIP-59551N"/>
<dbReference type="FunCoup" id="Q5BJU5">
    <property type="interactions" value="2200"/>
</dbReference>
<dbReference type="IntAct" id="Q5BJU5">
    <property type="interactions" value="3"/>
</dbReference>
<dbReference type="STRING" id="10116.ENSRNOP00000027421"/>
<dbReference type="iPTMnet" id="Q5BJU5"/>
<dbReference type="PhosphoSitePlus" id="Q5BJU5"/>
<dbReference type="SwissPalm" id="Q5BJU5"/>
<dbReference type="PaxDb" id="10116-ENSRNOP00000027421"/>
<dbReference type="GeneID" id="361705"/>
<dbReference type="KEGG" id="rno:361705"/>
<dbReference type="AGR" id="RGD:1304930"/>
<dbReference type="CTD" id="254263"/>
<dbReference type="RGD" id="1304930">
    <property type="gene designation" value="Cnih2"/>
</dbReference>
<dbReference type="VEuPathDB" id="HostDB:ENSRNOG00000020247"/>
<dbReference type="eggNOG" id="KOG2729">
    <property type="taxonomic scope" value="Eukaryota"/>
</dbReference>
<dbReference type="HOGENOM" id="CLU_112942_1_0_1"/>
<dbReference type="InParanoid" id="Q5BJU5"/>
<dbReference type="OrthoDB" id="56199at9989"/>
<dbReference type="PhylomeDB" id="Q5BJU5"/>
<dbReference type="Reactome" id="R-RNO-204005">
    <property type="pathway name" value="COPII-mediated vesicle transport"/>
</dbReference>
<dbReference type="Reactome" id="R-RNO-5694530">
    <property type="pathway name" value="Cargo concentration in the ER"/>
</dbReference>
<dbReference type="PRO" id="PR:Q5BJU5"/>
<dbReference type="Proteomes" id="UP000002494">
    <property type="component" value="Chromosome 1"/>
</dbReference>
<dbReference type="Bgee" id="ENSRNOG00000020247">
    <property type="expression patterns" value="Expressed in Ammon's horn and 14 other cell types or tissues"/>
</dbReference>
<dbReference type="GO" id="GO:0032281">
    <property type="term" value="C:AMPA glutamate receptor complex"/>
    <property type="evidence" value="ECO:0000314"/>
    <property type="project" value="UniProtKB"/>
</dbReference>
<dbReference type="GO" id="GO:0030425">
    <property type="term" value="C:dendrite"/>
    <property type="evidence" value="ECO:0000250"/>
    <property type="project" value="UniProtKB"/>
</dbReference>
<dbReference type="GO" id="GO:0043198">
    <property type="term" value="C:dendritic shaft"/>
    <property type="evidence" value="ECO:0000314"/>
    <property type="project" value="UniProtKB"/>
</dbReference>
<dbReference type="GO" id="GO:0043197">
    <property type="term" value="C:dendritic spine"/>
    <property type="evidence" value="ECO:0000250"/>
    <property type="project" value="UniProtKB"/>
</dbReference>
<dbReference type="GO" id="GO:0005789">
    <property type="term" value="C:endoplasmic reticulum membrane"/>
    <property type="evidence" value="ECO:0007669"/>
    <property type="project" value="UniProtKB-SubCell"/>
</dbReference>
<dbReference type="GO" id="GO:0098978">
    <property type="term" value="C:glutamatergic synapse"/>
    <property type="evidence" value="ECO:0000314"/>
    <property type="project" value="SynGO"/>
</dbReference>
<dbReference type="GO" id="GO:0014069">
    <property type="term" value="C:postsynaptic density"/>
    <property type="evidence" value="ECO:0000250"/>
    <property type="project" value="UniProtKB"/>
</dbReference>
<dbReference type="GO" id="GO:0098839">
    <property type="term" value="C:postsynaptic density membrane"/>
    <property type="evidence" value="ECO:0000314"/>
    <property type="project" value="SynGO"/>
</dbReference>
<dbReference type="GO" id="GO:0045211">
    <property type="term" value="C:postsynaptic membrane"/>
    <property type="evidence" value="ECO:0000314"/>
    <property type="project" value="UniProtKB"/>
</dbReference>
<dbReference type="GO" id="GO:0045202">
    <property type="term" value="C:synapse"/>
    <property type="evidence" value="ECO:0000318"/>
    <property type="project" value="GO_Central"/>
</dbReference>
<dbReference type="GO" id="GO:0005102">
    <property type="term" value="F:signaling receptor binding"/>
    <property type="evidence" value="ECO:0000318"/>
    <property type="project" value="GO_Central"/>
</dbReference>
<dbReference type="GO" id="GO:0051668">
    <property type="term" value="P:localization within membrane"/>
    <property type="evidence" value="ECO:0000314"/>
    <property type="project" value="MGI"/>
</dbReference>
<dbReference type="GO" id="GO:1903743">
    <property type="term" value="P:negative regulation of anterograde synaptic vesicle transport"/>
    <property type="evidence" value="ECO:0000315"/>
    <property type="project" value="UniProtKB"/>
</dbReference>
<dbReference type="GO" id="GO:1902684">
    <property type="term" value="P:negative regulation of receptor localization to synapse"/>
    <property type="evidence" value="ECO:0000315"/>
    <property type="project" value="UniProtKB"/>
</dbReference>
<dbReference type="GO" id="GO:2000311">
    <property type="term" value="P:regulation of AMPA receptor activity"/>
    <property type="evidence" value="ECO:0000314"/>
    <property type="project" value="UniProtKB"/>
</dbReference>
<dbReference type="GO" id="GO:0042391">
    <property type="term" value="P:regulation of membrane potential"/>
    <property type="evidence" value="ECO:0000314"/>
    <property type="project" value="MGI"/>
</dbReference>
<dbReference type="GO" id="GO:2000310">
    <property type="term" value="P:regulation of NMDA receptor activity"/>
    <property type="evidence" value="ECO:0000315"/>
    <property type="project" value="UniProtKB"/>
</dbReference>
<dbReference type="GO" id="GO:0035249">
    <property type="term" value="P:synaptic transmission, glutamatergic"/>
    <property type="evidence" value="ECO:0000314"/>
    <property type="project" value="MGI"/>
</dbReference>
<dbReference type="GO" id="GO:0016192">
    <property type="term" value="P:vesicle-mediated transport"/>
    <property type="evidence" value="ECO:0007669"/>
    <property type="project" value="InterPro"/>
</dbReference>
<dbReference type="InterPro" id="IPR003377">
    <property type="entry name" value="Cornichon"/>
</dbReference>
<dbReference type="InterPro" id="IPR033466">
    <property type="entry name" value="Cornichon_conserved"/>
</dbReference>
<dbReference type="PANTHER" id="PTHR12290">
    <property type="entry name" value="CORNICHON-RELATED"/>
    <property type="match status" value="1"/>
</dbReference>
<dbReference type="Pfam" id="PF03311">
    <property type="entry name" value="Cornichon"/>
    <property type="match status" value="2"/>
</dbReference>
<dbReference type="SMART" id="SM01398">
    <property type="entry name" value="Cornichon"/>
    <property type="match status" value="1"/>
</dbReference>
<dbReference type="PROSITE" id="PS01340">
    <property type="entry name" value="CORNICHON"/>
    <property type="match status" value="1"/>
</dbReference>
<feature type="chain" id="PRO_0000122227" description="Protein cornichon homolog 2">
    <location>
        <begin position="1"/>
        <end position="160"/>
    </location>
</feature>
<feature type="topological domain" description="Cytoplasmic" evidence="3">
    <location>
        <begin position="1"/>
        <end position="10"/>
    </location>
</feature>
<feature type="transmembrane region" description="Helical" evidence="3">
    <location>
        <begin position="11"/>
        <end position="31"/>
    </location>
</feature>
<feature type="topological domain" description="Lumenal" evidence="3">
    <location>
        <begin position="32"/>
        <end position="72"/>
    </location>
</feature>
<feature type="transmembrane region" description="Helical" evidence="3">
    <location>
        <begin position="73"/>
        <end position="93"/>
    </location>
</feature>
<feature type="topological domain" description="Cytoplasmic" evidence="3">
    <location>
        <begin position="94"/>
        <end position="138"/>
    </location>
</feature>
<feature type="transmembrane region" description="Helical" evidence="3">
    <location>
        <begin position="139"/>
        <end position="159"/>
    </location>
</feature>
<feature type="topological domain" description="Lumenal" evidence="3">
    <location>
        <position position="160"/>
    </location>
</feature>
<feature type="helix" evidence="8">
    <location>
        <begin position="5"/>
        <end position="39"/>
    </location>
</feature>
<feature type="helix" evidence="8">
    <location>
        <begin position="47"/>
        <end position="66"/>
    </location>
</feature>
<feature type="helix" evidence="8">
    <location>
        <begin position="68"/>
        <end position="84"/>
    </location>
</feature>
<feature type="helix" evidence="8">
    <location>
        <begin position="88"/>
        <end position="107"/>
    </location>
</feature>
<feature type="turn" evidence="8">
    <location>
        <begin position="119"/>
        <end position="123"/>
    </location>
</feature>
<feature type="helix" evidence="8">
    <location>
        <begin position="125"/>
        <end position="158"/>
    </location>
</feature>
<protein>
    <recommendedName>
        <fullName evidence="6">Protein cornichon homolog 2</fullName>
        <shortName>CNIH-2</shortName>
    </recommendedName>
    <alternativeName>
        <fullName>Cornichon family AMPA receptor auxiliary protein 2</fullName>
    </alternativeName>
    <alternativeName>
        <fullName>Cornichon-like protein</fullName>
    </alternativeName>
</protein>
<comment type="function">
    <text evidence="4 5">Regulates the trafficking and gating properties of AMPA-selective glutamate receptors (AMPARs). Promotes their targeting to the cell membrane and synapses and modulates their gating properties by regulating their rates of activation, deactivation and desensitization. Blocks CACNG8-mediated resensitization of AMPA receptors.</text>
</comment>
<comment type="subunit">
    <text evidence="1 2 4 5">Acts as an auxiliary subunit for AMPA-selective glutamate receptors (AMPARs). Found in a complex with GRIA1, GRIA2, GRIA3, GRIA4, CNIH3, CACNG2, CACNG3, CACNG4, CACNG5, CACNG7 and CACNG8 Interacts with CACGN8 (By similarity). Interacts with GRIA1. Found in a complex with GRIA1, GRIA2, GRIA3, GRIA4, DLG4 and CACNG8 (By similarity).</text>
</comment>
<comment type="interaction">
    <interactant intactId="EBI-15874082">
        <id>Q5BJU5</id>
    </interactant>
    <interactant intactId="EBI-371642">
        <id>P19490</id>
        <label>Gria1</label>
    </interactant>
    <organismsDiffer>false</organismsDiffer>
    <experiments>3</experiments>
</comment>
<comment type="subcellular location">
    <subcellularLocation>
        <location evidence="1">Endoplasmic reticulum membrane</location>
        <topology evidence="1">Multi-pass membrane protein</topology>
    </subcellularLocation>
    <subcellularLocation>
        <location evidence="4">Postsynaptic cell membrane</location>
        <topology evidence="4">Multi-pass membrane protein</topology>
    </subcellularLocation>
    <subcellularLocation>
        <location evidence="1">Cell projection</location>
        <location evidence="1">Dendrite</location>
    </subcellularLocation>
    <subcellularLocation>
        <location evidence="1">Cell projection</location>
        <location evidence="1">Dendritic spine</location>
    </subcellularLocation>
    <subcellularLocation>
        <location evidence="1">Postsynaptic density</location>
    </subcellularLocation>
    <text>Also localizes to the cell membrane of extrasynaptic sites (dendritic shafts, spines of pyramidal cells).</text>
</comment>
<comment type="tissue specificity">
    <text evidence="4 5">Brain. Expressed in the neocortex, hippocampal formation, and cerebellum (at protein level).</text>
</comment>
<comment type="similarity">
    <text evidence="6">Belongs to the cornichon family.</text>
</comment>